<proteinExistence type="evidence at transcript level"/>
<dbReference type="EMBL" id="AY310148">
    <property type="protein sequence ID" value="AAP78756.1"/>
    <property type="molecule type" value="mRNA"/>
</dbReference>
<dbReference type="RefSeq" id="NP_001008859.1">
    <property type="nucleotide sequence ID" value="NM_001008859.1"/>
</dbReference>
<dbReference type="SMR" id="Q7TQ82"/>
<dbReference type="FunCoup" id="Q7TQ82">
    <property type="interactions" value="2035"/>
</dbReference>
<dbReference type="STRING" id="10116.ENSRNOP00000074250"/>
<dbReference type="PhosphoSitePlus" id="Q7TQ82"/>
<dbReference type="PaxDb" id="10116-ENSRNOP00000046067"/>
<dbReference type="Ensembl" id="ENSRNOT00000040204.3">
    <property type="protein sequence ID" value="ENSRNOP00000046067.2"/>
    <property type="gene ID" value="ENSRNOG00000022609.7"/>
</dbReference>
<dbReference type="UCSC" id="RGD:1311516">
    <property type="organism name" value="rat"/>
</dbReference>
<dbReference type="AGR" id="RGD:1311516"/>
<dbReference type="RGD" id="1311516">
    <property type="gene designation" value="Mrps10"/>
</dbReference>
<dbReference type="eggNOG" id="KOG3321">
    <property type="taxonomic scope" value="Eukaryota"/>
</dbReference>
<dbReference type="GeneTree" id="ENSGT00390000009045"/>
<dbReference type="HOGENOM" id="CLU_099082_1_0_1"/>
<dbReference type="InParanoid" id="Q7TQ82"/>
<dbReference type="PhylomeDB" id="Q7TQ82"/>
<dbReference type="Reactome" id="R-RNO-5389840">
    <property type="pathway name" value="Mitochondrial translation elongation"/>
</dbReference>
<dbReference type="Reactome" id="R-RNO-5419276">
    <property type="pathway name" value="Mitochondrial translation termination"/>
</dbReference>
<dbReference type="Reactome" id="R-RNO-9837999">
    <property type="pathway name" value="Mitochondrial protein degradation"/>
</dbReference>
<dbReference type="PRO" id="PR:Q7TQ82"/>
<dbReference type="Proteomes" id="UP000002494">
    <property type="component" value="Chromosome 9"/>
</dbReference>
<dbReference type="Bgee" id="ENSRNOG00000022609">
    <property type="expression patterns" value="Expressed in quadriceps femoris and 19 other cell types or tissues"/>
</dbReference>
<dbReference type="ExpressionAtlas" id="Q7TQ82">
    <property type="expression patterns" value="baseline and differential"/>
</dbReference>
<dbReference type="GO" id="GO:0005763">
    <property type="term" value="C:mitochondrial small ribosomal subunit"/>
    <property type="evidence" value="ECO:0000250"/>
    <property type="project" value="UniProtKB"/>
</dbReference>
<dbReference type="GO" id="GO:0005739">
    <property type="term" value="C:mitochondrion"/>
    <property type="evidence" value="ECO:0000318"/>
    <property type="project" value="GO_Central"/>
</dbReference>
<dbReference type="FunFam" id="3.30.70.600:FF:000005">
    <property type="entry name" value="28S ribosomal protein S10, mitochondrial"/>
    <property type="match status" value="1"/>
</dbReference>
<dbReference type="Gene3D" id="3.30.70.600">
    <property type="entry name" value="Ribosomal protein S10 domain"/>
    <property type="match status" value="1"/>
</dbReference>
<dbReference type="InterPro" id="IPR027486">
    <property type="entry name" value="Ribosomal_uS10_dom"/>
</dbReference>
<dbReference type="InterPro" id="IPR036838">
    <property type="entry name" value="Ribosomal_uS10_dom_sf"/>
</dbReference>
<dbReference type="InterPro" id="IPR040055">
    <property type="entry name" value="Ribosomal_uS10m"/>
</dbReference>
<dbReference type="PANTHER" id="PTHR13334">
    <property type="entry name" value="MITOCHONDRIAL 28S RIBOSOMAL PROTEIN S10"/>
    <property type="match status" value="1"/>
</dbReference>
<dbReference type="PANTHER" id="PTHR13334:SF4">
    <property type="entry name" value="SMALL RIBOSOMAL SUBUNIT PROTEIN US10M"/>
    <property type="match status" value="1"/>
</dbReference>
<dbReference type="Pfam" id="PF00338">
    <property type="entry name" value="Ribosomal_S10"/>
    <property type="match status" value="1"/>
</dbReference>
<dbReference type="SMART" id="SM01403">
    <property type="entry name" value="Ribosomal_S10"/>
    <property type="match status" value="1"/>
</dbReference>
<dbReference type="SUPFAM" id="SSF54999">
    <property type="entry name" value="Ribosomal protein S10"/>
    <property type="match status" value="1"/>
</dbReference>
<accession>Q7TQ82</accession>
<sequence length="155" mass="17960">MAARAACVAVCRRLQQITTSDEPDTLYKRLSILVKAHDKAVLDSYEYFAVLAAKELGLSIKVHEPPRKIERFTLLKSVHIFKKHRVQYEMRTLYRCLELKHLTGCTANVYLEYIQRNLPEGVAMEVTKTQIQQLPEHIKEPMWETVSGEKEETKS</sequence>
<gene>
    <name type="primary">Mrps10</name>
    <name type="ORF">Ac1179</name>
</gene>
<comment type="subunit">
    <text evidence="1">Component of the mitochondrial ribosome small subunit (28S) which comprises a 12S rRNA and about 30 distinct proteins.</text>
</comment>
<comment type="subcellular location">
    <subcellularLocation>
        <location evidence="1">Mitochondrion</location>
    </subcellularLocation>
</comment>
<comment type="similarity">
    <text evidence="2">Belongs to the universal ribosomal protein uS10 family.</text>
</comment>
<evidence type="ECO:0000250" key="1">
    <source>
        <dbReference type="UniProtKB" id="P82664"/>
    </source>
</evidence>
<evidence type="ECO:0000305" key="2"/>
<protein>
    <recommendedName>
        <fullName evidence="2">Small ribosomal subunit protein uS10m</fullName>
    </recommendedName>
    <alternativeName>
        <fullName>28S ribosomal protein S10, mitochondrial</fullName>
        <shortName>MRP-S10</shortName>
        <shortName>S10mt</shortName>
    </alternativeName>
    <alternativeName>
        <fullName>Liver regeneration-related protein LRRG099</fullName>
    </alternativeName>
</protein>
<keyword id="KW-0496">Mitochondrion</keyword>
<keyword id="KW-1185">Reference proteome</keyword>
<keyword id="KW-0687">Ribonucleoprotein</keyword>
<keyword id="KW-0689">Ribosomal protein</keyword>
<name>RT10_RAT</name>
<reference key="1">
    <citation type="submission" date="2003-05" db="EMBL/GenBank/DDBJ databases">
        <title>Liver regeneration after PH.</title>
        <authorList>
            <person name="Xu C.S."/>
            <person name="Li W.Q."/>
            <person name="Li Y.C."/>
            <person name="Han H.P."/>
            <person name="Wang G.P."/>
            <person name="Chai L.Q."/>
            <person name="Yuan J.Y."/>
            <person name="Yang K.J."/>
            <person name="Yan H.M."/>
            <person name="Chang C.F."/>
            <person name="Zhao L.F."/>
            <person name="Ma H."/>
            <person name="Wang L."/>
            <person name="Wang S.F."/>
            <person name="Shi J.B."/>
            <person name="Rahman S."/>
            <person name="Wang Q.N."/>
            <person name="Zhang J.B."/>
        </authorList>
    </citation>
    <scope>NUCLEOTIDE SEQUENCE [LARGE SCALE MRNA]</scope>
    <source>
        <strain>Sprague-Dawley</strain>
        <tissue>Liver</tissue>
    </source>
</reference>
<feature type="chain" id="PRO_0000146678" description="Small ribosomal subunit protein uS10m">
    <location>
        <begin position="1"/>
        <end position="155"/>
    </location>
</feature>
<organism>
    <name type="scientific">Rattus norvegicus</name>
    <name type="common">Rat</name>
    <dbReference type="NCBI Taxonomy" id="10116"/>
    <lineage>
        <taxon>Eukaryota</taxon>
        <taxon>Metazoa</taxon>
        <taxon>Chordata</taxon>
        <taxon>Craniata</taxon>
        <taxon>Vertebrata</taxon>
        <taxon>Euteleostomi</taxon>
        <taxon>Mammalia</taxon>
        <taxon>Eutheria</taxon>
        <taxon>Euarchontoglires</taxon>
        <taxon>Glires</taxon>
        <taxon>Rodentia</taxon>
        <taxon>Myomorpha</taxon>
        <taxon>Muroidea</taxon>
        <taxon>Muridae</taxon>
        <taxon>Murinae</taxon>
        <taxon>Rattus</taxon>
    </lineage>
</organism>